<evidence type="ECO:0000305" key="1"/>
<geneLocation type="plasmid">
    <name>pME2001</name>
</geneLocation>
<geneLocation type="plasmid">
    <name>pMTBMA4</name>
</geneLocation>
<gene>
    <name type="ordered locus">MTBMA_p00010</name>
</gene>
<proteinExistence type="predicted"/>
<name>Y2001_METTM</name>
<sequence>MNSMSKKEYKHFERSITLHIKHADFELVGQKYRGRDLYEYLFIKGSKPIHTATGKTSNLYEIISEDKGPDEALKIIGDTFTEDDINILLRGGFHDDNKTPEGVLELIQHILLAGEVLHPGGDVIEPQSFKDYPEKIQAYADQLINDDSIDILESITRVIGEAHYGDEKAVKLLLLSIGTLFLRDTPPVHQALRGSTGSGKTDLVLKTVLAVPERYVHILRSASPKYLFYASETGILREDYNIFVFDDIELNDEIIAISKTITDNILPEKEHHTVKDQEALKLEIPGEGLAIFTRARDIHDNELNDRLLYNNPVEDEDHSRFVKEKIKEEAISGSVMDDKRIMEAYEVIRAVYERLIEGDVRVYNPYLHLLDLRGYSNRDIKHIVGLVKAVTWYRQHKRRREGSYVREGGHDIIIGTEDDLRDALELWMSIDTLQRYKLDRKQEKFLKSLPEYSDELYKQHTNSIFWDDPELPTYSGLAERLGLSKSTIYRWVNGRHEKDRDIEGLKDKGNKGLVIIKPLEPENPKSPSLIYRKPGIVGKHLQLKNGGEASESGFTLFPSVDMDLGTAENARIWKKTIFHSMVLGVSQIQSNIQDNLIQEWLDNNTNPMETHEDVVEFIVDVRAFIHDNLQTPPDVTCNPVYTILGNGKHPLETGGESSNHGDKHDLVLTRAGSIVGNRVNSENKGSEPSDEMTCFPQKNYYSGVGGDLQAEYTDAMARGDDSMIGELEARIPPDTPENLEERRVTLKKKLKDKSISAGEKMELLKELGGVLSTLMRKPVDNERIVEYAKELGEVRREIEDMQGG</sequence>
<dbReference type="EMBL" id="X17205">
    <property type="protein sequence ID" value="CAA35074.1"/>
    <property type="status" value="ALT_FRAME"/>
    <property type="molecule type" value="Genomic_DNA"/>
</dbReference>
<dbReference type="EMBL" id="X17205">
    <property type="protein sequence ID" value="CAA35075.1"/>
    <property type="status" value="ALT_SEQ"/>
    <property type="molecule type" value="Genomic_DNA"/>
</dbReference>
<dbReference type="EMBL" id="CP001711">
    <property type="protein sequence ID" value="ADL59366.1"/>
    <property type="molecule type" value="Genomic_DNA"/>
</dbReference>
<dbReference type="RefSeq" id="WP_013296576.1">
    <property type="nucleotide sequence ID" value="NC_014409.1"/>
</dbReference>
<dbReference type="GeneID" id="9705513"/>
<dbReference type="KEGG" id="mmg:MTBMA_p00010"/>
<dbReference type="HOGENOM" id="CLU_350114_0_0_2"/>
<dbReference type="OrthoDB" id="387722at2157"/>
<dbReference type="Proteomes" id="UP000000345">
    <property type="component" value="Plasmid pMTBMA4"/>
</dbReference>
<dbReference type="CDD" id="cd00093">
    <property type="entry name" value="HTH_XRE"/>
    <property type="match status" value="1"/>
</dbReference>
<dbReference type="InterPro" id="IPR001387">
    <property type="entry name" value="Cro/C1-type_HTH"/>
</dbReference>
<dbReference type="InterPro" id="IPR027417">
    <property type="entry name" value="P-loop_NTPase"/>
</dbReference>
<dbReference type="SUPFAM" id="SSF52540">
    <property type="entry name" value="P-loop containing nucleoside triphosphate hydrolases"/>
    <property type="match status" value="1"/>
</dbReference>
<comment type="sequence caution" evidence="1">
    <conflict type="frameshift">
        <sequence resource="EMBL-CDS" id="CAA35074"/>
    </conflict>
</comment>
<comment type="sequence caution" evidence="1">
    <conflict type="erroneous initiation">
        <sequence resource="EMBL-CDS" id="CAA35075"/>
    </conflict>
    <text>Truncated N-terminus.</text>
</comment>
<comment type="sequence caution" evidence="1">
    <conflict type="frameshift">
        <sequence resource="EMBL-CDS" id="CAA35075"/>
    </conflict>
</comment>
<protein>
    <recommendedName>
        <fullName>Uncharacterized protein MTBMA_p00010</fullName>
    </recommendedName>
</protein>
<accession>P14932</accession>
<accession>D9PYX2</accession>
<accession>P14933</accession>
<feature type="chain" id="PRO_0000066386" description="Uncharacterized protein MTBMA_p00010">
    <location>
        <begin position="1"/>
        <end position="804"/>
    </location>
</feature>
<keyword id="KW-0614">Plasmid</keyword>
<organism>
    <name type="scientific">Methanothermobacter marburgensis (strain ATCC BAA-927 / DSM 2133 / JCM 14651 / NBRC 100331 / OCM 82 / Marburg)</name>
    <name type="common">Methanobacterium thermoautotrophicum</name>
    <dbReference type="NCBI Taxonomy" id="79929"/>
    <lineage>
        <taxon>Archaea</taxon>
        <taxon>Methanobacteriati</taxon>
        <taxon>Methanobacteriota</taxon>
        <taxon>Methanomada group</taxon>
        <taxon>Methanobacteria</taxon>
        <taxon>Methanobacteriales</taxon>
        <taxon>Methanobacteriaceae</taxon>
        <taxon>Methanothermobacter</taxon>
    </lineage>
</organism>
<reference key="1">
    <citation type="journal article" date="1990" name="Nucleic Acids Res.">
        <title>Complete nucleotide sequence of plasmid pME2001 of Methanobacterium thermoautotrophicum (Marburg).</title>
        <authorList>
            <person name="Bokranz M."/>
            <person name="Klein A."/>
            <person name="Meile L."/>
        </authorList>
    </citation>
    <scope>NUCLEOTIDE SEQUENCE [GENOMIC DNA]</scope>
    <source>
        <strain>ATCC BAA-927 / DSM 2133 / JCM 14651 / NBRC 100331 / OCM 82 / Marburg</strain>
        <plasmid>pME2001</plasmid>
    </source>
</reference>
<reference key="2">
    <citation type="journal article" date="2010" name="J. Bacteriol.">
        <title>Complete genome sequence of Methanothermobacter marburgensis, a methanoarchaeon model organism.</title>
        <authorList>
            <person name="Liesegang H."/>
            <person name="Kaster A.K."/>
            <person name="Wiezer A."/>
            <person name="Goenrich M."/>
            <person name="Wollherr A."/>
            <person name="Seedorf H."/>
            <person name="Gottschalk G."/>
            <person name="Thauer R.K."/>
        </authorList>
    </citation>
    <scope>NUCLEOTIDE SEQUENCE [LARGE SCALE GENOMIC DNA]</scope>
    <source>
        <strain>ATCC BAA-927 / DSM 2133 / JCM 14651 / NBRC 100331 / OCM 82 / Marburg</strain>
        <plasmid>pMTBMA4</plasmid>
    </source>
</reference>